<protein>
    <recommendedName>
        <fullName evidence="1">Protein RecA</fullName>
    </recommendedName>
    <alternativeName>
        <fullName evidence="1">Recombinase A</fullName>
    </alternativeName>
</protein>
<reference key="1">
    <citation type="journal article" date="2006" name="Genome Biol.">
        <title>The genome of Rhizobium leguminosarum has recognizable core and accessory components.</title>
        <authorList>
            <person name="Young J.P.W."/>
            <person name="Crossman L.C."/>
            <person name="Johnston A.W.B."/>
            <person name="Thomson N.R."/>
            <person name="Ghazoui Z.F."/>
            <person name="Hull K.H."/>
            <person name="Wexler M."/>
            <person name="Curson A.R.J."/>
            <person name="Todd J.D."/>
            <person name="Poole P.S."/>
            <person name="Mauchline T.H."/>
            <person name="East A.K."/>
            <person name="Quail M.A."/>
            <person name="Churcher C."/>
            <person name="Arrowsmith C."/>
            <person name="Cherevach I."/>
            <person name="Chillingworth T."/>
            <person name="Clarke K."/>
            <person name="Cronin A."/>
            <person name="Davis P."/>
            <person name="Fraser A."/>
            <person name="Hance Z."/>
            <person name="Hauser H."/>
            <person name="Jagels K."/>
            <person name="Moule S."/>
            <person name="Mungall K."/>
            <person name="Norbertczak H."/>
            <person name="Rabbinowitsch E."/>
            <person name="Sanders M."/>
            <person name="Simmonds M."/>
            <person name="Whitehead S."/>
            <person name="Parkhill J."/>
        </authorList>
    </citation>
    <scope>NUCLEOTIDE SEQUENCE [LARGE SCALE GENOMIC DNA]</scope>
    <source>
        <strain>DSM 114642 / LMG 32736 / 3841</strain>
    </source>
</reference>
<name>RECA_RHIJ3</name>
<organism>
    <name type="scientific">Rhizobium johnstonii (strain DSM 114642 / LMG 32736 / 3841)</name>
    <name type="common">Rhizobium leguminosarum bv. viciae</name>
    <dbReference type="NCBI Taxonomy" id="216596"/>
    <lineage>
        <taxon>Bacteria</taxon>
        <taxon>Pseudomonadati</taxon>
        <taxon>Pseudomonadota</taxon>
        <taxon>Alphaproteobacteria</taxon>
        <taxon>Hyphomicrobiales</taxon>
        <taxon>Rhizobiaceae</taxon>
        <taxon>Rhizobium/Agrobacterium group</taxon>
        <taxon>Rhizobium</taxon>
        <taxon>Rhizobium johnstonii</taxon>
    </lineage>
</organism>
<keyword id="KW-0067">ATP-binding</keyword>
<keyword id="KW-0963">Cytoplasm</keyword>
<keyword id="KW-0227">DNA damage</keyword>
<keyword id="KW-0233">DNA recombination</keyword>
<keyword id="KW-0234">DNA repair</keyword>
<keyword id="KW-0238">DNA-binding</keyword>
<keyword id="KW-0547">Nucleotide-binding</keyword>
<keyword id="KW-0742">SOS response</keyword>
<sequence length="364" mass="39097">MSQNSLRLVEDKSVDKSKALEAALSQIERSFGKGSIMKLGSNENVVEIETISTGSLGLDIALGVGGLPRGRIIEIYGPESSGKTTLALQTIAEAQKKGGICAFVDAEHALDPVYARKLGVDLQNLLISQPDTGEQALEITDTLVRSGAVDVLVVDSVAALTPRAEIEGEMGDSLPGLQARLMSQALRKLTASISKSNTMVIFINQIRMKIGVMFGSPETTTGGNALKFYASVRLDIRRIGAVKEREEVIGNQTRVKVVKNKMAPPFKQVEFDIMYGEGVSKTGELVDLGVKAGIVEKSGAWFSYNSQRLGQGRENAKTFLRDNPDLAREIELSLRQNAGLIADRFLQNGGPDPDDGDGDATAEM</sequence>
<proteinExistence type="inferred from homology"/>
<dbReference type="EMBL" id="AM236080">
    <property type="protein sequence ID" value="CAK08125.1"/>
    <property type="molecule type" value="Genomic_DNA"/>
</dbReference>
<dbReference type="RefSeq" id="WP_003540131.1">
    <property type="nucleotide sequence ID" value="NC_008380.1"/>
</dbReference>
<dbReference type="SMR" id="Q1MFZ8"/>
<dbReference type="EnsemblBacteria" id="CAK08125">
    <property type="protein sequence ID" value="CAK08125"/>
    <property type="gene ID" value="RL2637"/>
</dbReference>
<dbReference type="GeneID" id="84670187"/>
<dbReference type="KEGG" id="rle:RL2637"/>
<dbReference type="eggNOG" id="COG0468">
    <property type="taxonomic scope" value="Bacteria"/>
</dbReference>
<dbReference type="HOGENOM" id="CLU_040469_1_2_5"/>
<dbReference type="Proteomes" id="UP000006575">
    <property type="component" value="Chromosome"/>
</dbReference>
<dbReference type="GO" id="GO:0005829">
    <property type="term" value="C:cytosol"/>
    <property type="evidence" value="ECO:0007669"/>
    <property type="project" value="TreeGrafter"/>
</dbReference>
<dbReference type="GO" id="GO:0005524">
    <property type="term" value="F:ATP binding"/>
    <property type="evidence" value="ECO:0007669"/>
    <property type="project" value="UniProtKB-UniRule"/>
</dbReference>
<dbReference type="GO" id="GO:0016887">
    <property type="term" value="F:ATP hydrolysis activity"/>
    <property type="evidence" value="ECO:0007669"/>
    <property type="project" value="InterPro"/>
</dbReference>
<dbReference type="GO" id="GO:0140664">
    <property type="term" value="F:ATP-dependent DNA damage sensor activity"/>
    <property type="evidence" value="ECO:0007669"/>
    <property type="project" value="InterPro"/>
</dbReference>
<dbReference type="GO" id="GO:0003684">
    <property type="term" value="F:damaged DNA binding"/>
    <property type="evidence" value="ECO:0007669"/>
    <property type="project" value="UniProtKB-UniRule"/>
</dbReference>
<dbReference type="GO" id="GO:0003697">
    <property type="term" value="F:single-stranded DNA binding"/>
    <property type="evidence" value="ECO:0007669"/>
    <property type="project" value="UniProtKB-UniRule"/>
</dbReference>
<dbReference type="GO" id="GO:0006310">
    <property type="term" value="P:DNA recombination"/>
    <property type="evidence" value="ECO:0007669"/>
    <property type="project" value="UniProtKB-UniRule"/>
</dbReference>
<dbReference type="GO" id="GO:0006281">
    <property type="term" value="P:DNA repair"/>
    <property type="evidence" value="ECO:0007669"/>
    <property type="project" value="UniProtKB-UniRule"/>
</dbReference>
<dbReference type="GO" id="GO:0009432">
    <property type="term" value="P:SOS response"/>
    <property type="evidence" value="ECO:0007669"/>
    <property type="project" value="UniProtKB-UniRule"/>
</dbReference>
<dbReference type="CDD" id="cd00983">
    <property type="entry name" value="RecA"/>
    <property type="match status" value="1"/>
</dbReference>
<dbReference type="FunFam" id="3.40.50.300:FF:000087">
    <property type="entry name" value="Recombinase RecA"/>
    <property type="match status" value="1"/>
</dbReference>
<dbReference type="Gene3D" id="3.40.50.300">
    <property type="entry name" value="P-loop containing nucleotide triphosphate hydrolases"/>
    <property type="match status" value="1"/>
</dbReference>
<dbReference type="HAMAP" id="MF_00268">
    <property type="entry name" value="RecA"/>
    <property type="match status" value="1"/>
</dbReference>
<dbReference type="InterPro" id="IPR003593">
    <property type="entry name" value="AAA+_ATPase"/>
</dbReference>
<dbReference type="InterPro" id="IPR013765">
    <property type="entry name" value="DNA_recomb/repair_RecA"/>
</dbReference>
<dbReference type="InterPro" id="IPR020584">
    <property type="entry name" value="DNA_recomb/repair_RecA_CS"/>
</dbReference>
<dbReference type="InterPro" id="IPR027417">
    <property type="entry name" value="P-loop_NTPase"/>
</dbReference>
<dbReference type="InterPro" id="IPR049261">
    <property type="entry name" value="RecA-like_C"/>
</dbReference>
<dbReference type="InterPro" id="IPR049428">
    <property type="entry name" value="RecA-like_N"/>
</dbReference>
<dbReference type="InterPro" id="IPR020588">
    <property type="entry name" value="RecA_ATP-bd"/>
</dbReference>
<dbReference type="InterPro" id="IPR023400">
    <property type="entry name" value="RecA_C_sf"/>
</dbReference>
<dbReference type="InterPro" id="IPR020587">
    <property type="entry name" value="RecA_monomer-monomer_interface"/>
</dbReference>
<dbReference type="NCBIfam" id="TIGR02012">
    <property type="entry name" value="tigrfam_recA"/>
    <property type="match status" value="1"/>
</dbReference>
<dbReference type="PANTHER" id="PTHR45900:SF1">
    <property type="entry name" value="MITOCHONDRIAL DNA REPAIR PROTEIN RECA HOMOLOG-RELATED"/>
    <property type="match status" value="1"/>
</dbReference>
<dbReference type="PANTHER" id="PTHR45900">
    <property type="entry name" value="RECA"/>
    <property type="match status" value="1"/>
</dbReference>
<dbReference type="Pfam" id="PF00154">
    <property type="entry name" value="RecA"/>
    <property type="match status" value="1"/>
</dbReference>
<dbReference type="Pfam" id="PF21096">
    <property type="entry name" value="RecA_C"/>
    <property type="match status" value="1"/>
</dbReference>
<dbReference type="PRINTS" id="PR00142">
    <property type="entry name" value="RECA"/>
</dbReference>
<dbReference type="SMART" id="SM00382">
    <property type="entry name" value="AAA"/>
    <property type="match status" value="1"/>
</dbReference>
<dbReference type="SUPFAM" id="SSF52540">
    <property type="entry name" value="P-loop containing nucleoside triphosphate hydrolases"/>
    <property type="match status" value="1"/>
</dbReference>
<dbReference type="SUPFAM" id="SSF54752">
    <property type="entry name" value="RecA protein, C-terminal domain"/>
    <property type="match status" value="1"/>
</dbReference>
<dbReference type="PROSITE" id="PS00321">
    <property type="entry name" value="RECA_1"/>
    <property type="match status" value="1"/>
</dbReference>
<dbReference type="PROSITE" id="PS50162">
    <property type="entry name" value="RECA_2"/>
    <property type="match status" value="1"/>
</dbReference>
<dbReference type="PROSITE" id="PS50163">
    <property type="entry name" value="RECA_3"/>
    <property type="match status" value="1"/>
</dbReference>
<evidence type="ECO:0000255" key="1">
    <source>
        <dbReference type="HAMAP-Rule" id="MF_00268"/>
    </source>
</evidence>
<evidence type="ECO:0000256" key="2">
    <source>
        <dbReference type="SAM" id="MobiDB-lite"/>
    </source>
</evidence>
<accession>Q1MFZ8</accession>
<gene>
    <name evidence="1" type="primary">recA</name>
    <name type="ordered locus">RL2637</name>
</gene>
<comment type="function">
    <text evidence="1">Can catalyze the hydrolysis of ATP in the presence of single-stranded DNA, the ATP-dependent uptake of single-stranded DNA by duplex DNA, and the ATP-dependent hybridization of homologous single-stranded DNAs. It interacts with LexA causing its activation and leading to its autocatalytic cleavage.</text>
</comment>
<comment type="subcellular location">
    <subcellularLocation>
        <location evidence="1">Cytoplasm</location>
    </subcellularLocation>
</comment>
<comment type="similarity">
    <text evidence="1">Belongs to the RecA family.</text>
</comment>
<feature type="chain" id="PRO_1000047979" description="Protein RecA">
    <location>
        <begin position="1"/>
        <end position="364"/>
    </location>
</feature>
<feature type="region of interest" description="Disordered" evidence="2">
    <location>
        <begin position="343"/>
        <end position="364"/>
    </location>
</feature>
<feature type="compositionally biased region" description="Acidic residues" evidence="2">
    <location>
        <begin position="352"/>
        <end position="364"/>
    </location>
</feature>
<feature type="binding site" evidence="1">
    <location>
        <begin position="77"/>
        <end position="84"/>
    </location>
    <ligand>
        <name>ATP</name>
        <dbReference type="ChEBI" id="CHEBI:30616"/>
    </ligand>
</feature>